<accession>Q2TXF1</accession>
<reference key="1">
    <citation type="journal article" date="2005" name="Nature">
        <title>Genome sequencing and analysis of Aspergillus oryzae.</title>
        <authorList>
            <person name="Machida M."/>
            <person name="Asai K."/>
            <person name="Sano M."/>
            <person name="Tanaka T."/>
            <person name="Kumagai T."/>
            <person name="Terai G."/>
            <person name="Kusumoto K."/>
            <person name="Arima T."/>
            <person name="Akita O."/>
            <person name="Kashiwagi Y."/>
            <person name="Abe K."/>
            <person name="Gomi K."/>
            <person name="Horiuchi H."/>
            <person name="Kitamoto K."/>
            <person name="Kobayashi T."/>
            <person name="Takeuchi M."/>
            <person name="Denning D.W."/>
            <person name="Galagan J.E."/>
            <person name="Nierman W.C."/>
            <person name="Yu J."/>
            <person name="Archer D.B."/>
            <person name="Bennett J.W."/>
            <person name="Bhatnagar D."/>
            <person name="Cleveland T.E."/>
            <person name="Fedorova N.D."/>
            <person name="Gotoh O."/>
            <person name="Horikawa H."/>
            <person name="Hosoyama A."/>
            <person name="Ichinomiya M."/>
            <person name="Igarashi R."/>
            <person name="Iwashita K."/>
            <person name="Juvvadi P.R."/>
            <person name="Kato M."/>
            <person name="Kato Y."/>
            <person name="Kin T."/>
            <person name="Kokubun A."/>
            <person name="Maeda H."/>
            <person name="Maeyama N."/>
            <person name="Maruyama J."/>
            <person name="Nagasaki H."/>
            <person name="Nakajima T."/>
            <person name="Oda K."/>
            <person name="Okada K."/>
            <person name="Paulsen I."/>
            <person name="Sakamoto K."/>
            <person name="Sawano T."/>
            <person name="Takahashi M."/>
            <person name="Takase K."/>
            <person name="Terabayashi Y."/>
            <person name="Wortman J.R."/>
            <person name="Yamada O."/>
            <person name="Yamagata Y."/>
            <person name="Anazawa H."/>
            <person name="Hata Y."/>
            <person name="Koide Y."/>
            <person name="Komori T."/>
            <person name="Koyama Y."/>
            <person name="Minetoki T."/>
            <person name="Suharnan S."/>
            <person name="Tanaka A."/>
            <person name="Isono K."/>
            <person name="Kuhara S."/>
            <person name="Ogasawara N."/>
            <person name="Kikuchi H."/>
        </authorList>
    </citation>
    <scope>NUCLEOTIDE SEQUENCE [LARGE SCALE GENOMIC DNA]</scope>
    <source>
        <strain>ATCC 42149 / RIB 40</strain>
    </source>
</reference>
<reference key="2">
    <citation type="journal article" date="2018" name="J. Fungi">
        <title>Oryzines A &amp; B, maleidride congeners from Aspergillus oryzae and their putative biosynthesis.</title>
        <authorList>
            <person name="Wasil Z."/>
            <person name="Kuhnert E."/>
            <person name="Simpson T.J."/>
            <person name="Cox R.J."/>
        </authorList>
    </citation>
    <scope>FUNCTION</scope>
    <scope>PATHWAY</scope>
</reference>
<name>ORYE_ASPOR</name>
<organism>
    <name type="scientific">Aspergillus oryzae (strain ATCC 42149 / RIB 40)</name>
    <name type="common">Yellow koji mold</name>
    <dbReference type="NCBI Taxonomy" id="510516"/>
    <lineage>
        <taxon>Eukaryota</taxon>
        <taxon>Fungi</taxon>
        <taxon>Dikarya</taxon>
        <taxon>Ascomycota</taxon>
        <taxon>Pezizomycotina</taxon>
        <taxon>Eurotiomycetes</taxon>
        <taxon>Eurotiomycetidae</taxon>
        <taxon>Eurotiales</taxon>
        <taxon>Aspergillaceae</taxon>
        <taxon>Aspergillus</taxon>
        <taxon>Aspergillus subgen. Circumdati</taxon>
    </lineage>
</organism>
<keyword id="KW-1185">Reference proteome</keyword>
<keyword id="KW-0808">Transferase</keyword>
<comment type="function">
    <text evidence="2 5">Citrate synthase-like protein; part of the gene cluster that mediates the biosynthesis of oryzines, natural products with an unusual maleidride backbone (PubMed:30104550). The two subunits of the fungal fatty acid synthase oryfasA and oryfasB probably form octenoic acid (Probable). This fatty acid is most likely activated by the acyl-CoA ligase oryP to give octenyl-CoA before the citrate synthase-like protein oryE catalyzes condensation with oxaloacetate to form tricarboxylic acid (Probable). The next steps of the pathways are conjectural, but a favorite possible route has been proposed, beginning with decarboxylation and concomitant dehydration by the decarboxylase oryM, followed by tautomerization, which may lead to the production of a diene intermediate (Probable). Reduction of this diene intermediate could give the known metabolite piliformic acid (Probable). On the pathway to oryzine B and oryzine A, however, hydroxylation of the diene by the alpha-ketoglutarate-dependent dioxygenase oryG and lactonisation by the lactonohydrolases oryH or oryL could give oryzine B directly (Probable). Finally, enoyl reduction by the dehydrogenase oryD would then convert oryzine B into oryzine A (Probable).</text>
</comment>
<comment type="pathway">
    <text evidence="5">Secondary metabolite biosynthesis.</text>
</comment>
<comment type="similarity">
    <text evidence="4">Belongs to the citrate synthase family.</text>
</comment>
<gene>
    <name evidence="3" type="primary">oryE</name>
    <name type="ORF">AO090010000170</name>
</gene>
<feature type="chain" id="PRO_0000450491" description="Citrate synthase-like protein oryE">
    <location>
        <begin position="1"/>
        <end position="447"/>
    </location>
</feature>
<feature type="active site" evidence="1">
    <location>
        <position position="331"/>
    </location>
</feature>
<feature type="active site" evidence="1">
    <location>
        <position position="387"/>
    </location>
</feature>
<evidence type="ECO:0000255" key="1">
    <source>
        <dbReference type="PIRSR" id="PIRSR001369-1"/>
    </source>
</evidence>
<evidence type="ECO:0000269" key="2">
    <source>
    </source>
</evidence>
<evidence type="ECO:0000303" key="3">
    <source>
    </source>
</evidence>
<evidence type="ECO:0000305" key="4"/>
<evidence type="ECO:0000305" key="5">
    <source>
    </source>
</evidence>
<dbReference type="EC" id="2.3.3.-" evidence="5"/>
<dbReference type="EMBL" id="BA000056">
    <property type="protein sequence ID" value="BAE66072.1"/>
    <property type="molecule type" value="Genomic_DNA"/>
</dbReference>
<dbReference type="RefSeq" id="XP_001827205.1">
    <property type="nucleotide sequence ID" value="XM_001827153.1"/>
</dbReference>
<dbReference type="SMR" id="Q2TXF1"/>
<dbReference type="STRING" id="510516.Q2TXF1"/>
<dbReference type="EnsemblFungi" id="BAE66072">
    <property type="protein sequence ID" value="BAE66072"/>
    <property type="gene ID" value="AO090010000170"/>
</dbReference>
<dbReference type="GeneID" id="5999339"/>
<dbReference type="KEGG" id="aor:AO090010000170"/>
<dbReference type="VEuPathDB" id="FungiDB:AO090010000170"/>
<dbReference type="HOGENOM" id="CLU_025068_0_1_1"/>
<dbReference type="OMA" id="QGFMAHW"/>
<dbReference type="OrthoDB" id="28655at5052"/>
<dbReference type="Proteomes" id="UP000006564">
    <property type="component" value="Chromosome 8"/>
</dbReference>
<dbReference type="GO" id="GO:0046912">
    <property type="term" value="F:acyltransferase activity, acyl groups converted into alkyl on transfer"/>
    <property type="evidence" value="ECO:0007669"/>
    <property type="project" value="InterPro"/>
</dbReference>
<dbReference type="GO" id="GO:0006099">
    <property type="term" value="P:tricarboxylic acid cycle"/>
    <property type="evidence" value="ECO:0007669"/>
    <property type="project" value="InterPro"/>
</dbReference>
<dbReference type="CDD" id="cd06107">
    <property type="entry name" value="EcCS_AthCS-per_like"/>
    <property type="match status" value="1"/>
</dbReference>
<dbReference type="Gene3D" id="1.10.580.10">
    <property type="entry name" value="Citrate Synthase, domain 1"/>
    <property type="match status" value="1"/>
</dbReference>
<dbReference type="Gene3D" id="1.10.230.10">
    <property type="entry name" value="Cytochrome P450-Terp, domain 2"/>
    <property type="match status" value="1"/>
</dbReference>
<dbReference type="InterPro" id="IPR016142">
    <property type="entry name" value="Citrate_synth-like_lrg_a-sub"/>
</dbReference>
<dbReference type="InterPro" id="IPR016143">
    <property type="entry name" value="Citrate_synth-like_sm_a-sub"/>
</dbReference>
<dbReference type="InterPro" id="IPR002020">
    <property type="entry name" value="Citrate_synthase"/>
</dbReference>
<dbReference type="InterPro" id="IPR019810">
    <property type="entry name" value="Citrate_synthase_AS"/>
</dbReference>
<dbReference type="InterPro" id="IPR024176">
    <property type="entry name" value="Citrate_synthase_bac-typ"/>
</dbReference>
<dbReference type="InterPro" id="IPR036969">
    <property type="entry name" value="Citrate_synthase_sf"/>
</dbReference>
<dbReference type="PANTHER" id="PTHR42871">
    <property type="entry name" value="CITRATE SYNTHASE"/>
    <property type="match status" value="1"/>
</dbReference>
<dbReference type="PANTHER" id="PTHR42871:SF1">
    <property type="entry name" value="CITRATE SYNTHASE"/>
    <property type="match status" value="1"/>
</dbReference>
<dbReference type="Pfam" id="PF00285">
    <property type="entry name" value="Citrate_synt"/>
    <property type="match status" value="1"/>
</dbReference>
<dbReference type="PIRSF" id="PIRSF001369">
    <property type="entry name" value="Citrate_synth"/>
    <property type="match status" value="1"/>
</dbReference>
<dbReference type="PRINTS" id="PR00143">
    <property type="entry name" value="CITRTSNTHASE"/>
</dbReference>
<dbReference type="SUPFAM" id="SSF48256">
    <property type="entry name" value="Citrate synthase"/>
    <property type="match status" value="1"/>
</dbReference>
<dbReference type="PROSITE" id="PS00480">
    <property type="entry name" value="CITRATE_SYNTHASE"/>
    <property type="match status" value="1"/>
</dbReference>
<proteinExistence type="inferred from homology"/>
<protein>
    <recommendedName>
        <fullName evidence="3">Citrate synthase-like protein oryE</fullName>
        <ecNumber evidence="5">2.3.3.-</ecNumber>
    </recommendedName>
    <alternativeName>
        <fullName evidence="3">Oryzines biosynthesis cluster protein E</fullName>
    </alternativeName>
</protein>
<sequence>MTVTQEASPKRESLHIIDDRTGSYYSIPIVNNAINASDFKKVTAPEDKAYPANQTENGLRVYDPGYSNTAVSHSKITYIDGLKGTIQYRGYSINDIVGRKTFIDTAHLLIWGHWPSTAEAETLQQRLDQVPVPQDFVFNVIKSFPRDGSLMGMVIAGLSALQSSDMNAIPAHVGKTIYLNNPELADQQIIRVMANMSMLTAAAYCHHIGRDFTPPRAGLSYIENFLLMTGHVEAATGLPNPRYVNAIERLWVLIADHEMTCSTAALLQTASALPDVISCMVSAISALYGPLHGGAIEVAYKNIESIGSISNVPAKIARVKAGKERLYGYGHRVYRVTDPRFVFIREILNELSEEVEKDPLLKVAFEVDRVASEDEYFTSRNLRPNADLFAAFVYKALGFPPEFILPLSILSRTQGFMAHWREAMGNPPRIWRPGQIYTGDLNKSMDE</sequence>